<feature type="chain" id="PRO_0000334244" description="Na(+)/H(+) antiporter NhaA">
    <location>
        <begin position="1"/>
        <end position="468"/>
    </location>
</feature>
<feature type="transmembrane region" description="Helical" evidence="1">
    <location>
        <begin position="28"/>
        <end position="48"/>
    </location>
</feature>
<feature type="transmembrane region" description="Helical" evidence="1">
    <location>
        <begin position="79"/>
        <end position="99"/>
    </location>
</feature>
<feature type="transmembrane region" description="Helical" evidence="1">
    <location>
        <begin position="115"/>
        <end position="135"/>
    </location>
</feature>
<feature type="transmembrane region" description="Helical" evidence="1">
    <location>
        <begin position="143"/>
        <end position="163"/>
    </location>
</feature>
<feature type="transmembrane region" description="Helical" evidence="1">
    <location>
        <begin position="173"/>
        <end position="193"/>
    </location>
</feature>
<feature type="transmembrane region" description="Helical" evidence="1">
    <location>
        <begin position="196"/>
        <end position="216"/>
    </location>
</feature>
<feature type="transmembrane region" description="Helical" evidence="1">
    <location>
        <begin position="219"/>
        <end position="239"/>
    </location>
</feature>
<feature type="transmembrane region" description="Helical" evidence="1">
    <location>
        <begin position="240"/>
        <end position="260"/>
    </location>
</feature>
<feature type="transmembrane region" description="Helical" evidence="1">
    <location>
        <begin position="317"/>
        <end position="337"/>
    </location>
</feature>
<feature type="transmembrane region" description="Helical" evidence="1">
    <location>
        <begin position="356"/>
        <end position="376"/>
    </location>
</feature>
<feature type="transmembrane region" description="Helical" evidence="1">
    <location>
        <begin position="392"/>
        <end position="412"/>
    </location>
</feature>
<feature type="transmembrane region" description="Helical" evidence="1">
    <location>
        <begin position="426"/>
        <end position="446"/>
    </location>
</feature>
<evidence type="ECO:0000255" key="1">
    <source>
        <dbReference type="HAMAP-Rule" id="MF_01844"/>
    </source>
</evidence>
<keyword id="KW-0050">Antiport</keyword>
<keyword id="KW-0997">Cell inner membrane</keyword>
<keyword id="KW-1003">Cell membrane</keyword>
<keyword id="KW-0406">Ion transport</keyword>
<keyword id="KW-0472">Membrane</keyword>
<keyword id="KW-0915">Sodium</keyword>
<keyword id="KW-0739">Sodium transport</keyword>
<keyword id="KW-0812">Transmembrane</keyword>
<keyword id="KW-1133">Transmembrane helix</keyword>
<keyword id="KW-0813">Transport</keyword>
<reference key="1">
    <citation type="journal article" date="2008" name="BMC Genomics">
        <title>The missing link: Bordetella petrii is endowed with both the metabolic versatility of environmental bacteria and virulence traits of pathogenic Bordetellae.</title>
        <authorList>
            <person name="Gross R."/>
            <person name="Guzman C.A."/>
            <person name="Sebaihia M."/>
            <person name="Martin dos Santos V.A.P."/>
            <person name="Pieper D.H."/>
            <person name="Koebnik R."/>
            <person name="Lechner M."/>
            <person name="Bartels D."/>
            <person name="Buhrmester J."/>
            <person name="Choudhuri J.V."/>
            <person name="Ebensen T."/>
            <person name="Gaigalat L."/>
            <person name="Herrmann S."/>
            <person name="Khachane A.N."/>
            <person name="Larisch C."/>
            <person name="Link S."/>
            <person name="Linke B."/>
            <person name="Meyer F."/>
            <person name="Mormann S."/>
            <person name="Nakunst D."/>
            <person name="Rueckert C."/>
            <person name="Schneiker-Bekel S."/>
            <person name="Schulze K."/>
            <person name="Voerholter F.-J."/>
            <person name="Yevsa T."/>
            <person name="Engle J.T."/>
            <person name="Goldman W.E."/>
            <person name="Puehler A."/>
            <person name="Goebel U.B."/>
            <person name="Goesmann A."/>
            <person name="Bloecker H."/>
            <person name="Kaiser O."/>
            <person name="Martinez-Arias R."/>
        </authorList>
    </citation>
    <scope>NUCLEOTIDE SEQUENCE [LARGE SCALE GENOMIC DNA]</scope>
    <source>
        <strain>ATCC BAA-461 / DSM 12804 / CCUG 43448</strain>
    </source>
</reference>
<protein>
    <recommendedName>
        <fullName evidence="1">Na(+)/H(+) antiporter NhaA</fullName>
    </recommendedName>
    <alternativeName>
        <fullName evidence="1">Sodium/proton antiporter NhaA</fullName>
    </alternativeName>
</protein>
<comment type="function">
    <text evidence="1">Na(+)/H(+) antiporter that extrudes sodium in exchange for external protons.</text>
</comment>
<comment type="catalytic activity">
    <reaction evidence="1">
        <text>Na(+)(in) + 2 H(+)(out) = Na(+)(out) + 2 H(+)(in)</text>
        <dbReference type="Rhea" id="RHEA:29251"/>
        <dbReference type="ChEBI" id="CHEBI:15378"/>
        <dbReference type="ChEBI" id="CHEBI:29101"/>
    </reaction>
    <physiologicalReaction direction="left-to-right" evidence="1">
        <dbReference type="Rhea" id="RHEA:29252"/>
    </physiologicalReaction>
</comment>
<comment type="subcellular location">
    <subcellularLocation>
        <location evidence="1">Cell inner membrane</location>
        <topology evidence="1">Multi-pass membrane protein</topology>
    </subcellularLocation>
</comment>
<comment type="similarity">
    <text evidence="1">Belongs to the NhaA Na(+)/H(+) (TC 2.A.33) antiporter family.</text>
</comment>
<dbReference type="EMBL" id="AM902716">
    <property type="protein sequence ID" value="CAP42763.1"/>
    <property type="molecule type" value="Genomic_DNA"/>
</dbReference>
<dbReference type="SMR" id="A9IMX7"/>
<dbReference type="STRING" id="94624.Bpet2421"/>
<dbReference type="KEGG" id="bpt:Bpet2421"/>
<dbReference type="eggNOG" id="COG3004">
    <property type="taxonomic scope" value="Bacteria"/>
</dbReference>
<dbReference type="Proteomes" id="UP000001225">
    <property type="component" value="Chromosome"/>
</dbReference>
<dbReference type="GO" id="GO:0005886">
    <property type="term" value="C:plasma membrane"/>
    <property type="evidence" value="ECO:0007669"/>
    <property type="project" value="UniProtKB-SubCell"/>
</dbReference>
<dbReference type="GO" id="GO:0015385">
    <property type="term" value="F:sodium:proton antiporter activity"/>
    <property type="evidence" value="ECO:0007669"/>
    <property type="project" value="TreeGrafter"/>
</dbReference>
<dbReference type="GO" id="GO:0006885">
    <property type="term" value="P:regulation of pH"/>
    <property type="evidence" value="ECO:0007669"/>
    <property type="project" value="InterPro"/>
</dbReference>
<dbReference type="Gene3D" id="1.20.1530.10">
    <property type="entry name" value="Na+/H+ antiporter like domain"/>
    <property type="match status" value="1"/>
</dbReference>
<dbReference type="HAMAP" id="MF_01844">
    <property type="entry name" value="NhaA"/>
    <property type="match status" value="1"/>
</dbReference>
<dbReference type="InterPro" id="IPR023171">
    <property type="entry name" value="Na/H_antiporter_dom_sf"/>
</dbReference>
<dbReference type="InterPro" id="IPR004670">
    <property type="entry name" value="NhaA"/>
</dbReference>
<dbReference type="NCBIfam" id="TIGR00773">
    <property type="entry name" value="NhaA"/>
    <property type="match status" value="1"/>
</dbReference>
<dbReference type="PANTHER" id="PTHR30341:SF0">
    <property type="entry name" value="NA(+)_H(+) ANTIPORTER NHAA"/>
    <property type="match status" value="1"/>
</dbReference>
<dbReference type="PANTHER" id="PTHR30341">
    <property type="entry name" value="SODIUM ION/PROTON ANTIPORTER NHAA-RELATED"/>
    <property type="match status" value="1"/>
</dbReference>
<dbReference type="Pfam" id="PF06965">
    <property type="entry name" value="Na_H_antiport_1"/>
    <property type="match status" value="1"/>
</dbReference>
<accession>A9IMX7</accession>
<sequence length="468" mass="49200">MTRHHSAPRNLPRAQLYAERAFATLERFLHVEAVSGAVLLAAAAIALVWANSAFAHSYHALWHAPLSFRLGSYEFAQPLHFWINDALMTLFFLAVGMEIRREIHEGALSNFRQAALPLAAALGGVVAPALIYLAFNGQAPRSAGWAVPTATDIAFAVGVLALLGRAIPGNVRIFLLALAIIDDIIAVLIIAFFYSGGLDYSGFAVAALGIAIVLGLQRIGIGTAYAYVLPGAIVWTGLLMTGAHPTLAGVVLGLMTPVVPRRMREQPLEMMSRATRELAGWYQAQPAAESGAPTLPLRQLRVAQREILPPVVRVQAALHPWVAYAIMPLFALANAGVSLDGVDLAAGGSHWVMAGVAGALIVGKPAGVIAMSWLLVRLGWCRLPPGVTWGGIVLIGLLAGVGFTMSIFIAMLAFAGDANMLGAAKLGVLLGSLATAMLGLAWGAIYARRLRGASATRGTAQAPDSAHS</sequence>
<organism>
    <name type="scientific">Bordetella petrii (strain ATCC BAA-461 / DSM 12804 / CCUG 43448)</name>
    <dbReference type="NCBI Taxonomy" id="340100"/>
    <lineage>
        <taxon>Bacteria</taxon>
        <taxon>Pseudomonadati</taxon>
        <taxon>Pseudomonadota</taxon>
        <taxon>Betaproteobacteria</taxon>
        <taxon>Burkholderiales</taxon>
        <taxon>Alcaligenaceae</taxon>
        <taxon>Bordetella</taxon>
    </lineage>
</organism>
<gene>
    <name evidence="1" type="primary">nhaA</name>
    <name type="ordered locus">Bpet2421</name>
</gene>
<name>NHAA_BORPD</name>
<proteinExistence type="inferred from homology"/>